<sequence length="474" mass="54100">MWTVQNRESLGLLSFPVMVAMVCCAHSSNEPSNMSYVKETVDRLLKGYDIRLRPDFGGPPVDVGMRIDVASIDMVSEVNMDYTLTMYFQQSWKDKRLSYSGIPLNLTLDNRVADQLWVPDTYFLNDKKSFVHGVTVKNRMIRLHPDGTVLYGLRITTTAACMMDLRRYPLDEQNCTLEIESYGYTTDDIEFYWNGGEGAVTGVNKIELPQFSIVDYKMVSKKVEFTTGAYPRLSLSFRLKRNIGYFILQTYMPSTLITILSWVSFWINYDASAARVALGITTVLTMTTISTHLRETLPKIPYVKAIDIYLMGCFVFVFLALLEYAFVNYIFFGKGPQKKGASKQDQSANEKNRLEMNKVQVDAHGNILLSTLEIRNETSGSEVLTGVSDPKATMYSYDSASIQYRKPLSSREGFGRGLDRHGVPGKGRIRRRASQLKVKIPDLTDVNSIDKWSRMFFPITFSLFNVVYWLYYVH</sequence>
<name>GBRB1_MOUSE</name>
<protein>
    <recommendedName>
        <fullName>Gamma-aminobutyric acid receptor subunit beta-1</fullName>
    </recommendedName>
    <alternativeName>
        <fullName evidence="3">GABA(A) receptor subunit beta-1</fullName>
        <shortName evidence="2">GABAAR subunit beta-1</shortName>
    </alternativeName>
</protein>
<dbReference type="EMBL" id="U14418">
    <property type="protein sequence ID" value="AAA79973.1"/>
    <property type="molecule type" value="mRNA"/>
</dbReference>
<dbReference type="CCDS" id="CCDS19329.1"/>
<dbReference type="PIR" id="S53530">
    <property type="entry name" value="S53530"/>
</dbReference>
<dbReference type="RefSeq" id="NP_032095.1">
    <property type="nucleotide sequence ID" value="NM_008069.5"/>
</dbReference>
<dbReference type="SMR" id="P50571"/>
<dbReference type="BioGRID" id="199802">
    <property type="interactions" value="6"/>
</dbReference>
<dbReference type="FunCoup" id="P50571">
    <property type="interactions" value="745"/>
</dbReference>
<dbReference type="STRING" id="10090.ENSMUSP00000031122"/>
<dbReference type="ChEMBL" id="CHEMBL2094133"/>
<dbReference type="DrugCentral" id="P50571"/>
<dbReference type="GlyCosmos" id="P50571">
    <property type="glycosylation" value="3 sites, No reported glycans"/>
</dbReference>
<dbReference type="GlyGen" id="P50571">
    <property type="glycosylation" value="5 sites, 2 N-linked glycans (2 sites), 1 O-linked glycan (1 site)"/>
</dbReference>
<dbReference type="iPTMnet" id="P50571"/>
<dbReference type="PhosphoSitePlus" id="P50571"/>
<dbReference type="PaxDb" id="10090-ENSMUSP00000031122"/>
<dbReference type="PeptideAtlas" id="P50571"/>
<dbReference type="ProteomicsDB" id="268850"/>
<dbReference type="ABCD" id="P50571">
    <property type="antibodies" value="1 sequenced antibody"/>
</dbReference>
<dbReference type="Antibodypedia" id="12048">
    <property type="antibodies" value="457 antibodies from 41 providers"/>
</dbReference>
<dbReference type="DNASU" id="14400"/>
<dbReference type="Ensembl" id="ENSMUST00000031122.9">
    <property type="protein sequence ID" value="ENSMUSP00000031122.8"/>
    <property type="gene ID" value="ENSMUSG00000029212.12"/>
</dbReference>
<dbReference type="GeneID" id="14400"/>
<dbReference type="KEGG" id="mmu:14400"/>
<dbReference type="UCSC" id="uc008xrb.1">
    <property type="organism name" value="mouse"/>
</dbReference>
<dbReference type="AGR" id="MGI:95619"/>
<dbReference type="CTD" id="2560"/>
<dbReference type="MGI" id="MGI:95619">
    <property type="gene designation" value="Gabrb1"/>
</dbReference>
<dbReference type="VEuPathDB" id="HostDB:ENSMUSG00000029212"/>
<dbReference type="eggNOG" id="KOG3643">
    <property type="taxonomic scope" value="Eukaryota"/>
</dbReference>
<dbReference type="GeneTree" id="ENSGT00940000154245"/>
<dbReference type="HOGENOM" id="CLU_010920_0_2_1"/>
<dbReference type="InParanoid" id="P50571"/>
<dbReference type="OMA" id="DRPIGHK"/>
<dbReference type="OrthoDB" id="8890589at2759"/>
<dbReference type="PhylomeDB" id="P50571"/>
<dbReference type="TreeFam" id="TF315453"/>
<dbReference type="Reactome" id="R-MMU-977443">
    <property type="pathway name" value="GABA receptor activation"/>
</dbReference>
<dbReference type="BioGRID-ORCS" id="14400">
    <property type="hits" value="2 hits in 79 CRISPR screens"/>
</dbReference>
<dbReference type="CD-CODE" id="CE726F99">
    <property type="entry name" value="Postsynaptic density"/>
</dbReference>
<dbReference type="ChiTaRS" id="Gabrb1">
    <property type="organism name" value="mouse"/>
</dbReference>
<dbReference type="PRO" id="PR:P50571"/>
<dbReference type="Proteomes" id="UP000000589">
    <property type="component" value="Chromosome 5"/>
</dbReference>
<dbReference type="RNAct" id="P50571">
    <property type="molecule type" value="protein"/>
</dbReference>
<dbReference type="Bgee" id="ENSMUSG00000029212">
    <property type="expression patterns" value="Expressed in subparaventricular zone and 139 other cell types or tissues"/>
</dbReference>
<dbReference type="ExpressionAtlas" id="P50571">
    <property type="expression patterns" value="baseline and differential"/>
</dbReference>
<dbReference type="GO" id="GO:0034707">
    <property type="term" value="C:chloride channel complex"/>
    <property type="evidence" value="ECO:0007669"/>
    <property type="project" value="UniProtKB-KW"/>
</dbReference>
<dbReference type="GO" id="GO:0030425">
    <property type="term" value="C:dendrite"/>
    <property type="evidence" value="ECO:0007669"/>
    <property type="project" value="Ensembl"/>
</dbReference>
<dbReference type="GO" id="GO:1902711">
    <property type="term" value="C:GABA-A receptor complex"/>
    <property type="evidence" value="ECO:0000250"/>
    <property type="project" value="UniProtKB"/>
</dbReference>
<dbReference type="GO" id="GO:0098982">
    <property type="term" value="C:GABA-ergic synapse"/>
    <property type="evidence" value="ECO:0000314"/>
    <property type="project" value="SynGO"/>
</dbReference>
<dbReference type="GO" id="GO:0005635">
    <property type="term" value="C:nuclear envelope"/>
    <property type="evidence" value="ECO:0007669"/>
    <property type="project" value="Ensembl"/>
</dbReference>
<dbReference type="GO" id="GO:0005886">
    <property type="term" value="C:plasma membrane"/>
    <property type="evidence" value="ECO:0000250"/>
    <property type="project" value="UniProtKB"/>
</dbReference>
<dbReference type="GO" id="GO:0099634">
    <property type="term" value="C:postsynaptic specialization membrane"/>
    <property type="evidence" value="ECO:0007669"/>
    <property type="project" value="Ensembl"/>
</dbReference>
<dbReference type="GO" id="GO:0048787">
    <property type="term" value="C:presynaptic active zone membrane"/>
    <property type="evidence" value="ECO:0007669"/>
    <property type="project" value="Ensembl"/>
</dbReference>
<dbReference type="GO" id="GO:0098685">
    <property type="term" value="C:Schaffer collateral - CA1 synapse"/>
    <property type="evidence" value="ECO:0000314"/>
    <property type="project" value="SynGO"/>
</dbReference>
<dbReference type="GO" id="GO:0150047">
    <property type="term" value="F:G protein-coupled neurotransmitter receptor activity involved in regulation of presynaptic membrane potential"/>
    <property type="evidence" value="ECO:0000314"/>
    <property type="project" value="SynGO"/>
</dbReference>
<dbReference type="GO" id="GO:0050811">
    <property type="term" value="F:GABA receptor binding"/>
    <property type="evidence" value="ECO:0007669"/>
    <property type="project" value="Ensembl"/>
</dbReference>
<dbReference type="GO" id="GO:0004890">
    <property type="term" value="F:GABA-A receptor activity"/>
    <property type="evidence" value="ECO:0000250"/>
    <property type="project" value="UniProtKB"/>
</dbReference>
<dbReference type="GO" id="GO:0022851">
    <property type="term" value="F:GABA-gated chloride ion channel activity"/>
    <property type="evidence" value="ECO:0000250"/>
    <property type="project" value="UniProtKB"/>
</dbReference>
<dbReference type="GO" id="GO:0015276">
    <property type="term" value="F:ligand-gated monoatomic ion channel activity"/>
    <property type="evidence" value="ECO:0000250"/>
    <property type="project" value="UniProtKB"/>
</dbReference>
<dbReference type="GO" id="GO:0099507">
    <property type="term" value="F:ligand-gated monoatomic ion channel activity involved in regulation of presynaptic membrane potential"/>
    <property type="evidence" value="ECO:0007669"/>
    <property type="project" value="Ensembl"/>
</dbReference>
<dbReference type="GO" id="GO:1904315">
    <property type="term" value="F:transmitter-gated monoatomic ion channel activity involved in regulation of postsynaptic membrane potential"/>
    <property type="evidence" value="ECO:0007669"/>
    <property type="project" value="Ensembl"/>
</dbReference>
<dbReference type="GO" id="GO:0071420">
    <property type="term" value="P:cellular response to histamine"/>
    <property type="evidence" value="ECO:0000250"/>
    <property type="project" value="UniProtKB"/>
</dbReference>
<dbReference type="GO" id="GO:0021954">
    <property type="term" value="P:central nervous system neuron development"/>
    <property type="evidence" value="ECO:0007669"/>
    <property type="project" value="Ensembl"/>
</dbReference>
<dbReference type="GO" id="GO:0007214">
    <property type="term" value="P:gamma-aminobutyric acid signaling pathway"/>
    <property type="evidence" value="ECO:0000250"/>
    <property type="project" value="UniProtKB"/>
</dbReference>
<dbReference type="GO" id="GO:0006811">
    <property type="term" value="P:monoatomic ion transport"/>
    <property type="evidence" value="ECO:0000250"/>
    <property type="project" value="UniProtKB"/>
</dbReference>
<dbReference type="GO" id="GO:0042698">
    <property type="term" value="P:ovulation cycle"/>
    <property type="evidence" value="ECO:0007669"/>
    <property type="project" value="Ensembl"/>
</dbReference>
<dbReference type="GO" id="GO:0032570">
    <property type="term" value="P:response to progesterone"/>
    <property type="evidence" value="ECO:0007669"/>
    <property type="project" value="Ensembl"/>
</dbReference>
<dbReference type="GO" id="GO:0009636">
    <property type="term" value="P:response to toxic substance"/>
    <property type="evidence" value="ECO:0007669"/>
    <property type="project" value="Ensembl"/>
</dbReference>
<dbReference type="CDD" id="cd18999">
    <property type="entry name" value="LGIC_ECD_GABAAR_B"/>
    <property type="match status" value="1"/>
</dbReference>
<dbReference type="CDD" id="cd19053">
    <property type="entry name" value="LGIC_TM_GABAAR_beta"/>
    <property type="match status" value="1"/>
</dbReference>
<dbReference type="FunFam" id="2.70.170.10:FF:000004">
    <property type="entry name" value="Gamma-aminobutyric acid receptor subunit beta-2 isoform A"/>
    <property type="match status" value="1"/>
</dbReference>
<dbReference type="FunFam" id="1.20.58.390:FF:000067">
    <property type="entry name" value="Glycine receptor subunit alpha-2"/>
    <property type="match status" value="1"/>
</dbReference>
<dbReference type="Gene3D" id="2.70.170.10">
    <property type="entry name" value="Neurotransmitter-gated ion-channel ligand-binding domain"/>
    <property type="match status" value="1"/>
</dbReference>
<dbReference type="Gene3D" id="1.20.58.390">
    <property type="entry name" value="Neurotransmitter-gated ion-channel transmembrane domain"/>
    <property type="match status" value="1"/>
</dbReference>
<dbReference type="InterPro" id="IPR006028">
    <property type="entry name" value="GABAA/Glycine_rcpt"/>
</dbReference>
<dbReference type="InterPro" id="IPR002289">
    <property type="entry name" value="GABAAb_rcpt"/>
</dbReference>
<dbReference type="InterPro" id="IPR006202">
    <property type="entry name" value="Neur_chan_lig-bd"/>
</dbReference>
<dbReference type="InterPro" id="IPR036734">
    <property type="entry name" value="Neur_chan_lig-bd_sf"/>
</dbReference>
<dbReference type="InterPro" id="IPR006201">
    <property type="entry name" value="Neur_channel"/>
</dbReference>
<dbReference type="InterPro" id="IPR036719">
    <property type="entry name" value="Neuro-gated_channel_TM_sf"/>
</dbReference>
<dbReference type="InterPro" id="IPR038050">
    <property type="entry name" value="Neuro_actylchol_rec"/>
</dbReference>
<dbReference type="InterPro" id="IPR006029">
    <property type="entry name" value="Neurotrans-gated_channel_TM"/>
</dbReference>
<dbReference type="InterPro" id="IPR018000">
    <property type="entry name" value="Neurotransmitter_ion_chnl_CS"/>
</dbReference>
<dbReference type="NCBIfam" id="TIGR00860">
    <property type="entry name" value="LIC"/>
    <property type="match status" value="1"/>
</dbReference>
<dbReference type="PANTHER" id="PTHR18945">
    <property type="entry name" value="NEUROTRANSMITTER GATED ION CHANNEL"/>
    <property type="match status" value="1"/>
</dbReference>
<dbReference type="Pfam" id="PF02931">
    <property type="entry name" value="Neur_chan_LBD"/>
    <property type="match status" value="1"/>
</dbReference>
<dbReference type="Pfam" id="PF02932">
    <property type="entry name" value="Neur_chan_memb"/>
    <property type="match status" value="1"/>
</dbReference>
<dbReference type="PRINTS" id="PR01160">
    <property type="entry name" value="GABAARBETA"/>
</dbReference>
<dbReference type="PRINTS" id="PR00253">
    <property type="entry name" value="GABAARECEPTR"/>
</dbReference>
<dbReference type="PRINTS" id="PR00252">
    <property type="entry name" value="NRIONCHANNEL"/>
</dbReference>
<dbReference type="SUPFAM" id="SSF90112">
    <property type="entry name" value="Neurotransmitter-gated ion-channel transmembrane pore"/>
    <property type="match status" value="1"/>
</dbReference>
<dbReference type="SUPFAM" id="SSF63712">
    <property type="entry name" value="Nicotinic receptor ligand binding domain-like"/>
    <property type="match status" value="1"/>
</dbReference>
<dbReference type="PROSITE" id="PS00236">
    <property type="entry name" value="NEUROTR_ION_CHANNEL"/>
    <property type="match status" value="1"/>
</dbReference>
<proteinExistence type="evidence at protein level"/>
<gene>
    <name evidence="10" type="primary">Gabrb1</name>
</gene>
<feature type="signal peptide" evidence="7">
    <location>
        <begin position="1"/>
        <end position="25"/>
    </location>
</feature>
<feature type="chain" id="PRO_0000000457" description="Gamma-aminobutyric acid receptor subunit beta-1">
    <location>
        <begin position="26"/>
        <end position="474"/>
    </location>
</feature>
<feature type="topological domain" description="Extracellular" evidence="9">
    <location>
        <begin position="26"/>
        <end position="245"/>
    </location>
</feature>
<feature type="transmembrane region" description="Helical" evidence="9">
    <location>
        <begin position="246"/>
        <end position="267"/>
    </location>
</feature>
<feature type="transmembrane region" description="Helical" evidence="9">
    <location>
        <begin position="271"/>
        <end position="293"/>
    </location>
</feature>
<feature type="transmembrane region" description="Helical" evidence="9">
    <location>
        <begin position="305"/>
        <end position="327"/>
    </location>
</feature>
<feature type="topological domain" description="Cytoplasmic" evidence="9">
    <location>
        <begin position="328"/>
        <end position="451"/>
    </location>
</feature>
<feature type="transmembrane region" description="Helical" evidence="9">
    <location>
        <begin position="452"/>
        <end position="473"/>
    </location>
</feature>
<feature type="binding site" description="in chain B" evidence="5">
    <location>
        <position position="122"/>
    </location>
    <ligand>
        <name>histamine</name>
        <dbReference type="ChEBI" id="CHEBI:58432"/>
        <note>ligand shared between two neighboring beta subunits</note>
    </ligand>
</feature>
<feature type="binding site" description="in chain B" evidence="5">
    <location>
        <begin position="181"/>
        <end position="182"/>
    </location>
    <ligand>
        <name>histamine</name>
        <dbReference type="ChEBI" id="CHEBI:58432"/>
        <note>ligand shared between two neighboring beta subunits</note>
    </ligand>
</feature>
<feature type="binding site" description="in chain A" evidence="3">
    <location>
        <position position="182"/>
    </location>
    <ligand>
        <name>4-aminobutanoate</name>
        <dbReference type="ChEBI" id="CHEBI:59888"/>
        <note>ligand shared with the neighboring alpha subunit</note>
    </ligand>
</feature>
<feature type="binding site" description="in chain A" evidence="3">
    <location>
        <position position="227"/>
    </location>
    <ligand>
        <name>4-aminobutanoate</name>
        <dbReference type="ChEBI" id="CHEBI:59888"/>
        <note>ligand shared with the neighboring alpha subunit</note>
    </ligand>
</feature>
<feature type="binding site" description="in chain B" evidence="5">
    <location>
        <position position="227"/>
    </location>
    <ligand>
        <name>histamine</name>
        <dbReference type="ChEBI" id="CHEBI:58432"/>
        <note>ligand shared between two neighboring beta subunits</note>
    </ligand>
</feature>
<feature type="glycosylation site" description="N-linked (GlcNAc...) asparagine" evidence="7">
    <location>
        <position position="33"/>
    </location>
</feature>
<feature type="glycosylation site" description="N-linked (GlcNAc...) asparagine" evidence="7">
    <location>
        <position position="105"/>
    </location>
</feature>
<feature type="glycosylation site" description="N-linked (GlcNAc...) asparagine" evidence="7">
    <location>
        <position position="174"/>
    </location>
</feature>
<feature type="disulfide bond" evidence="3">
    <location>
        <begin position="161"/>
        <end position="175"/>
    </location>
</feature>
<reference key="1">
    <citation type="journal article" date="1995" name="Biochim. Biophys. Acta">
        <title>GABAA receptor beta 1, beta 2, and beta 3 subunits: comparisons in DBA/2J and C57BL/6J mice.</title>
        <authorList>
            <person name="Kamatchi G.L."/>
            <person name="Kofuji P."/>
            <person name="Wang J.B."/>
            <person name="Fernando J.C."/>
            <person name="Liu Z."/>
            <person name="Mathura J.R."/>
            <person name="Burt D.R."/>
        </authorList>
    </citation>
    <scope>NUCLEOTIDE SEQUENCE [MRNA]</scope>
    <source>
        <strain>C57BL/6J</strain>
        <strain>DBA/2J</strain>
        <tissue>Brain</tissue>
    </source>
</reference>
<reference key="2">
    <citation type="journal article" date="2001" name="Nat. Neurosci.">
        <title>GABA(A) receptor cell surface number and subunit stability are regulated by the ubiquitin-like protein Plic-1.</title>
        <authorList>
            <person name="Bedford F.K."/>
            <person name="Kittler J.T."/>
            <person name="Muller E."/>
            <person name="Thomas P."/>
            <person name="Uren J.M."/>
            <person name="Merlo D."/>
            <person name="Wisden W."/>
            <person name="Triller A."/>
            <person name="Smart T.G."/>
            <person name="Moss S.J."/>
        </authorList>
    </citation>
    <scope>INTERACTION WITH UBQLN1</scope>
</reference>
<accession>P50571</accession>
<comment type="function">
    <text evidence="3 4 5">Beta subunit of the heteropentameric ligand-gated chloride channel gated by gamma-aminobutyric acid (GABA), a major inhibitory neurotransmitter in the brain (By similarity). GABA-gated chloride channels, also named GABA(A) receptors (GABAAR), consist of five subunits arranged around a central pore and contain GABA active binding site(s) located at the alpha and beta subunit interface(s) (By similarity). When activated by GABA, GABAARs selectively allow the flow of chloride anions across the cell membrane down their electrochemical gradient (By similarity). Chloride influx into the postsynaptic neuron following GABAAR opening decreases the neuron ability to generate a new action potential, thereby reducing nerve transmission (By similarity). Beta-containing GABAARs can simultaneously bind GABA and histamine where histamine binds at the interface of two neighboring beta subunits, which may be involved in the regulation of sleep and wakefulness (By similarity).</text>
</comment>
<comment type="catalytic activity">
    <reaction evidence="4">
        <text>chloride(in) = chloride(out)</text>
        <dbReference type="Rhea" id="RHEA:29823"/>
        <dbReference type="ChEBI" id="CHEBI:17996"/>
    </reaction>
</comment>
<comment type="activity regulation">
    <text evidence="6">Potentiated by histamine.</text>
</comment>
<comment type="subunit">
    <text evidence="3 8">Heteropentamer, formed by a combination of alpha (GABRA1-6), beta (GABRB1-3), gamma (GABRG1-3), delta (GABRD), epsilon (GABRE), rho (GABRR1-3), pi (GABRP) and theta (GABRQ) chains, each subunit exhibiting distinct physiological and pharmacological properties (By similarity). Binds UBQLN1 (PubMed:11528422).</text>
</comment>
<comment type="subcellular location">
    <subcellularLocation>
        <location evidence="1">Postsynaptic cell membrane</location>
        <topology evidence="1">Multi-pass membrane protein</topology>
    </subcellularLocation>
    <subcellularLocation>
        <location evidence="1">Cell membrane</location>
        <topology evidence="1">Multi-pass membrane protein</topology>
    </subcellularLocation>
</comment>
<comment type="domain">
    <text evidence="3">GABAARs subunits share a common topological structure: a peptide sequence made up of a long extracellular N-terminal, four transmembrane domains, intracellular or cytoplasmic domain located between the third and the fourth transmembrane domains.</text>
</comment>
<comment type="similarity">
    <text evidence="9">Belongs to the ligand-gated ion channel (TC 1.A.9) family. Gamma-aminobutyric acid receptor (TC 1.A.9.5) subfamily. GABRB1 sub-subfamily.</text>
</comment>
<organism>
    <name type="scientific">Mus musculus</name>
    <name type="common">Mouse</name>
    <dbReference type="NCBI Taxonomy" id="10090"/>
    <lineage>
        <taxon>Eukaryota</taxon>
        <taxon>Metazoa</taxon>
        <taxon>Chordata</taxon>
        <taxon>Craniata</taxon>
        <taxon>Vertebrata</taxon>
        <taxon>Euteleostomi</taxon>
        <taxon>Mammalia</taxon>
        <taxon>Eutheria</taxon>
        <taxon>Euarchontoglires</taxon>
        <taxon>Glires</taxon>
        <taxon>Rodentia</taxon>
        <taxon>Myomorpha</taxon>
        <taxon>Muroidea</taxon>
        <taxon>Muridae</taxon>
        <taxon>Murinae</taxon>
        <taxon>Mus</taxon>
        <taxon>Mus</taxon>
    </lineage>
</organism>
<evidence type="ECO:0000250" key="1">
    <source>
        <dbReference type="UniProtKB" id="P08220"/>
    </source>
</evidence>
<evidence type="ECO:0000250" key="2">
    <source>
        <dbReference type="UniProtKB" id="P14867"/>
    </source>
</evidence>
<evidence type="ECO:0000250" key="3">
    <source>
        <dbReference type="UniProtKB" id="P15431"/>
    </source>
</evidence>
<evidence type="ECO:0000250" key="4">
    <source>
        <dbReference type="UniProtKB" id="P18505"/>
    </source>
</evidence>
<evidence type="ECO:0000250" key="5">
    <source>
        <dbReference type="UniProtKB" id="P28472"/>
    </source>
</evidence>
<evidence type="ECO:0000250" key="6">
    <source>
        <dbReference type="UniProtKB" id="P63138"/>
    </source>
</evidence>
<evidence type="ECO:0000255" key="7"/>
<evidence type="ECO:0000269" key="8">
    <source>
    </source>
</evidence>
<evidence type="ECO:0000305" key="9"/>
<evidence type="ECO:0000312" key="10">
    <source>
        <dbReference type="MGI" id="MGI:95619"/>
    </source>
</evidence>
<keyword id="KW-1003">Cell membrane</keyword>
<keyword id="KW-0868">Chloride</keyword>
<keyword id="KW-0869">Chloride channel</keyword>
<keyword id="KW-1015">Disulfide bond</keyword>
<keyword id="KW-0325">Glycoprotein</keyword>
<keyword id="KW-0407">Ion channel</keyword>
<keyword id="KW-0406">Ion transport</keyword>
<keyword id="KW-1071">Ligand-gated ion channel</keyword>
<keyword id="KW-0472">Membrane</keyword>
<keyword id="KW-0628">Postsynaptic cell membrane</keyword>
<keyword id="KW-0675">Receptor</keyword>
<keyword id="KW-1185">Reference proteome</keyword>
<keyword id="KW-0732">Signal</keyword>
<keyword id="KW-0770">Synapse</keyword>
<keyword id="KW-0812">Transmembrane</keyword>
<keyword id="KW-1133">Transmembrane helix</keyword>
<keyword id="KW-0813">Transport</keyword>